<dbReference type="EC" id="7.1.1.2"/>
<dbReference type="EMBL" id="AF224620">
    <property type="protein sequence ID" value="AAK70533.1"/>
    <property type="molecule type" value="Genomic_DNA"/>
</dbReference>
<dbReference type="SMR" id="Q955T4"/>
<dbReference type="GO" id="GO:0005743">
    <property type="term" value="C:mitochondrial inner membrane"/>
    <property type="evidence" value="ECO:0000250"/>
    <property type="project" value="UniProtKB"/>
</dbReference>
<dbReference type="GO" id="GO:0045271">
    <property type="term" value="C:respiratory chain complex I"/>
    <property type="evidence" value="ECO:0000250"/>
    <property type="project" value="UniProtKB"/>
</dbReference>
<dbReference type="GO" id="GO:0008137">
    <property type="term" value="F:NADH dehydrogenase (ubiquinone) activity"/>
    <property type="evidence" value="ECO:0000250"/>
    <property type="project" value="UniProtKB"/>
</dbReference>
<dbReference type="GO" id="GO:0042773">
    <property type="term" value="P:ATP synthesis coupled electron transport"/>
    <property type="evidence" value="ECO:0007669"/>
    <property type="project" value="InterPro"/>
</dbReference>
<dbReference type="FunFam" id="1.10.287.3510:FF:000002">
    <property type="entry name" value="NADH-ubiquinone oxidoreductase chain 4L"/>
    <property type="match status" value="1"/>
</dbReference>
<dbReference type="Gene3D" id="1.10.287.3510">
    <property type="match status" value="1"/>
</dbReference>
<dbReference type="InterPro" id="IPR001133">
    <property type="entry name" value="NADH_UbQ_OxRdtase_chain4L/K"/>
</dbReference>
<dbReference type="InterPro" id="IPR039428">
    <property type="entry name" value="NUOK/Mnh_C1-like"/>
</dbReference>
<dbReference type="PANTHER" id="PTHR11434:SF0">
    <property type="entry name" value="NADH-UBIQUINONE OXIDOREDUCTASE CHAIN 4L"/>
    <property type="match status" value="1"/>
</dbReference>
<dbReference type="PANTHER" id="PTHR11434">
    <property type="entry name" value="NADH-UBIQUINONE OXIDOREDUCTASE SUBUNIT ND4L"/>
    <property type="match status" value="1"/>
</dbReference>
<dbReference type="Pfam" id="PF00420">
    <property type="entry name" value="Oxidored_q2"/>
    <property type="match status" value="1"/>
</dbReference>
<name>NU4LM_ALLTR</name>
<gene>
    <name type="primary">MT-ND4L</name>
    <name type="synonym">MTND4L</name>
    <name type="synonym">NADH4L</name>
    <name type="synonym">ND4L</name>
</gene>
<sequence length="98" mass="10762">MPSISINIILAFAAALLGMLMFRSHMMSSLLCLEGMMLSMFILSTLIISNTQLTMSFMMPIMLLVFSACEAAIGLALLVMVSNTYGLDYIQNLNLLKC</sequence>
<feature type="chain" id="PRO_0000274968" description="NADH-ubiquinone oxidoreductase chain 4L">
    <location>
        <begin position="1"/>
        <end position="98"/>
    </location>
</feature>
<feature type="transmembrane region" description="Helical" evidence="3">
    <location>
        <begin position="2"/>
        <end position="22"/>
    </location>
</feature>
<feature type="transmembrane region" description="Helical" evidence="3">
    <location>
        <begin position="28"/>
        <end position="48"/>
    </location>
</feature>
<feature type="transmembrane region" description="Helical" evidence="3">
    <location>
        <begin position="61"/>
        <end position="81"/>
    </location>
</feature>
<proteinExistence type="inferred from homology"/>
<reference key="1">
    <citation type="journal article" date="2003" name="Proc. Natl. Acad. Sci. U.S.A.">
        <title>A molecular approach to comparative phylogeography of extant Malagasy lemurs.</title>
        <authorList>
            <person name="Pastorini J."/>
            <person name="Thalmann U."/>
            <person name="Martin R.D."/>
        </authorList>
    </citation>
    <scope>NUCLEOTIDE SEQUENCE [GENOMIC DNA]</scope>
</reference>
<accession>Q955T4</accession>
<protein>
    <recommendedName>
        <fullName>NADH-ubiquinone oxidoreductase chain 4L</fullName>
        <ecNumber>7.1.1.2</ecNumber>
    </recommendedName>
    <alternativeName>
        <fullName>NADH dehydrogenase subunit 4L</fullName>
    </alternativeName>
</protein>
<geneLocation type="mitochondrion"/>
<organism>
    <name type="scientific">Allocebus trichotis</name>
    <name type="common">Hairy-eared dwarf lemur</name>
    <name type="synonym">Cheirogaleus trichotis</name>
    <dbReference type="NCBI Taxonomy" id="3043103"/>
    <lineage>
        <taxon>Eukaryota</taxon>
        <taxon>Metazoa</taxon>
        <taxon>Chordata</taxon>
        <taxon>Craniata</taxon>
        <taxon>Vertebrata</taxon>
        <taxon>Euteleostomi</taxon>
        <taxon>Mammalia</taxon>
        <taxon>Eutheria</taxon>
        <taxon>Euarchontoglires</taxon>
        <taxon>Primates</taxon>
        <taxon>Strepsirrhini</taxon>
        <taxon>Lemuriformes</taxon>
        <taxon>Cheirogaleidae</taxon>
        <taxon>Allocebus</taxon>
    </lineage>
</organism>
<comment type="function">
    <text evidence="1">Core subunit of the mitochondrial membrane respiratory chain NADH dehydrogenase (Complex I) which catalyzes electron transfer from NADH through the respiratory chain, using ubiquinone as an electron acceptor. Part of the enzyme membrane arm which is embedded in the lipid bilayer and involved in proton translocation.</text>
</comment>
<comment type="catalytic activity">
    <reaction evidence="1">
        <text>a ubiquinone + NADH + 5 H(+)(in) = a ubiquinol + NAD(+) + 4 H(+)(out)</text>
        <dbReference type="Rhea" id="RHEA:29091"/>
        <dbReference type="Rhea" id="RHEA-COMP:9565"/>
        <dbReference type="Rhea" id="RHEA-COMP:9566"/>
        <dbReference type="ChEBI" id="CHEBI:15378"/>
        <dbReference type="ChEBI" id="CHEBI:16389"/>
        <dbReference type="ChEBI" id="CHEBI:17976"/>
        <dbReference type="ChEBI" id="CHEBI:57540"/>
        <dbReference type="ChEBI" id="CHEBI:57945"/>
        <dbReference type="EC" id="7.1.1.2"/>
    </reaction>
    <physiologicalReaction direction="left-to-right" evidence="1">
        <dbReference type="Rhea" id="RHEA:29092"/>
    </physiologicalReaction>
</comment>
<comment type="subunit">
    <text evidence="2">Core subunit of respiratory chain NADH dehydrogenase (Complex I) which is composed of 45 different subunits.</text>
</comment>
<comment type="subcellular location">
    <subcellularLocation>
        <location evidence="2">Mitochondrion inner membrane</location>
        <topology evidence="3">Multi-pass membrane protein</topology>
    </subcellularLocation>
</comment>
<comment type="similarity">
    <text evidence="4">Belongs to the complex I subunit 4L family.</text>
</comment>
<keyword id="KW-0249">Electron transport</keyword>
<keyword id="KW-0472">Membrane</keyword>
<keyword id="KW-0496">Mitochondrion</keyword>
<keyword id="KW-0999">Mitochondrion inner membrane</keyword>
<keyword id="KW-0520">NAD</keyword>
<keyword id="KW-0679">Respiratory chain</keyword>
<keyword id="KW-1278">Translocase</keyword>
<keyword id="KW-0812">Transmembrane</keyword>
<keyword id="KW-1133">Transmembrane helix</keyword>
<keyword id="KW-0813">Transport</keyword>
<keyword id="KW-0830">Ubiquinone</keyword>
<evidence type="ECO:0000250" key="1">
    <source>
        <dbReference type="UniProtKB" id="P03901"/>
    </source>
</evidence>
<evidence type="ECO:0000250" key="2">
    <source>
        <dbReference type="UniProtKB" id="P03902"/>
    </source>
</evidence>
<evidence type="ECO:0000255" key="3"/>
<evidence type="ECO:0000305" key="4"/>